<evidence type="ECO:0000305" key="1"/>
<organism>
    <name type="scientific">Rickettsia bellii (strain RML369-C)</name>
    <dbReference type="NCBI Taxonomy" id="336407"/>
    <lineage>
        <taxon>Bacteria</taxon>
        <taxon>Pseudomonadati</taxon>
        <taxon>Pseudomonadota</taxon>
        <taxon>Alphaproteobacteria</taxon>
        <taxon>Rickettsiales</taxon>
        <taxon>Rickettsiaceae</taxon>
        <taxon>Rickettsieae</taxon>
        <taxon>Rickettsia</taxon>
        <taxon>belli group</taxon>
    </lineage>
</organism>
<comment type="similarity">
    <text evidence="1">Belongs to the bacterial histone-like protein family.</text>
</comment>
<comment type="sequence caution" evidence="1">
    <conflict type="frameshift">
        <sequence resource="EMBL-CDS" id="ABE04262"/>
    </conflict>
</comment>
<accession>Q1RK52</accession>
<protein>
    <recommendedName>
        <fullName>Histone-like DNA-binding protein</fullName>
    </recommendedName>
</protein>
<proteinExistence type="inferred from homology"/>
<reference key="1">
    <citation type="journal article" date="2006" name="PLoS Genet.">
        <title>Genome sequence of Rickettsia bellii illuminates the role of amoebae in gene exchanges between intracellular pathogens.</title>
        <authorList>
            <person name="Ogata H."/>
            <person name="La Scola B."/>
            <person name="Audic S."/>
            <person name="Renesto P."/>
            <person name="Blanc G."/>
            <person name="Robert C."/>
            <person name="Fournier P.-E."/>
            <person name="Claverie J.-M."/>
            <person name="Raoult D."/>
        </authorList>
    </citation>
    <scope>NUCLEOTIDE SEQUENCE [LARGE SCALE GENOMIC DNA]</scope>
    <source>
        <strain>RML369-C</strain>
    </source>
</reference>
<keyword id="KW-0238">DNA-binding</keyword>
<feature type="chain" id="PRO_0000280384" description="Histone-like DNA-binding protein">
    <location>
        <begin position="1"/>
        <end position="94"/>
    </location>
</feature>
<name>HLP_RICBR</name>
<gene>
    <name type="ordered locus">RBE_0181</name>
</gene>
<sequence>MTITKEKIAFMLNAELGFSKSLCEEVVNAVFTNILDIAKEQKLILKNFGSFEVKHKNSRPGINFHTKSQITIEPKNILRFVPSAKLKALINEND</sequence>
<dbReference type="EMBL" id="CP000087">
    <property type="protein sequence ID" value="ABE04262.1"/>
    <property type="status" value="ALT_FRAME"/>
    <property type="molecule type" value="Genomic_DNA"/>
</dbReference>
<dbReference type="RefSeq" id="WP_011476876.1">
    <property type="nucleotide sequence ID" value="NC_007940.1"/>
</dbReference>
<dbReference type="SMR" id="Q1RK52"/>
<dbReference type="KEGG" id="rbe:RBE_0181"/>
<dbReference type="eggNOG" id="COG0776">
    <property type="taxonomic scope" value="Bacteria"/>
</dbReference>
<dbReference type="HOGENOM" id="CLU_105066_1_2_5"/>
<dbReference type="OrthoDB" id="9804203at2"/>
<dbReference type="Proteomes" id="UP000001951">
    <property type="component" value="Chromosome"/>
</dbReference>
<dbReference type="GO" id="GO:0005829">
    <property type="term" value="C:cytosol"/>
    <property type="evidence" value="ECO:0007669"/>
    <property type="project" value="TreeGrafter"/>
</dbReference>
<dbReference type="GO" id="GO:0003677">
    <property type="term" value="F:DNA binding"/>
    <property type="evidence" value="ECO:0007669"/>
    <property type="project" value="UniProtKB-KW"/>
</dbReference>
<dbReference type="GO" id="GO:0030527">
    <property type="term" value="F:structural constituent of chromatin"/>
    <property type="evidence" value="ECO:0007669"/>
    <property type="project" value="InterPro"/>
</dbReference>
<dbReference type="Gene3D" id="4.10.520.10">
    <property type="entry name" value="IHF-like DNA-binding proteins"/>
    <property type="match status" value="1"/>
</dbReference>
<dbReference type="InterPro" id="IPR000119">
    <property type="entry name" value="Hist_DNA-bd"/>
</dbReference>
<dbReference type="InterPro" id="IPR010992">
    <property type="entry name" value="IHF-like_DNA-bd_dom_sf"/>
</dbReference>
<dbReference type="PANTHER" id="PTHR33175">
    <property type="entry name" value="DNA-BINDING PROTEIN HU"/>
    <property type="match status" value="1"/>
</dbReference>
<dbReference type="PANTHER" id="PTHR33175:SF2">
    <property type="entry name" value="INTEGRATION HOST FACTOR SUBUNIT ALPHA"/>
    <property type="match status" value="1"/>
</dbReference>
<dbReference type="Pfam" id="PF00216">
    <property type="entry name" value="Bac_DNA_binding"/>
    <property type="match status" value="1"/>
</dbReference>
<dbReference type="SMART" id="SM00411">
    <property type="entry name" value="BHL"/>
    <property type="match status" value="1"/>
</dbReference>
<dbReference type="SUPFAM" id="SSF47729">
    <property type="entry name" value="IHF-like DNA-binding proteins"/>
    <property type="match status" value="1"/>
</dbReference>